<reference key="1">
    <citation type="journal article" date="2005" name="Nature">
        <title>The map-based sequence of the rice genome.</title>
        <authorList>
            <consortium name="International rice genome sequencing project (IRGSP)"/>
        </authorList>
    </citation>
    <scope>NUCLEOTIDE SEQUENCE [LARGE SCALE GENOMIC DNA]</scope>
    <source>
        <strain>cv. Nipponbare</strain>
    </source>
</reference>
<reference key="2">
    <citation type="journal article" date="2008" name="Nucleic Acids Res.">
        <title>The rice annotation project database (RAP-DB): 2008 update.</title>
        <authorList>
            <consortium name="The rice annotation project (RAP)"/>
        </authorList>
    </citation>
    <scope>GENOME REANNOTATION</scope>
    <source>
        <strain>cv. Nipponbare</strain>
    </source>
</reference>
<reference key="3">
    <citation type="journal article" date="2013" name="Rice">
        <title>Improvement of the Oryza sativa Nipponbare reference genome using next generation sequence and optical map data.</title>
        <authorList>
            <person name="Kawahara Y."/>
            <person name="de la Bastide M."/>
            <person name="Hamilton J.P."/>
            <person name="Kanamori H."/>
            <person name="McCombie W.R."/>
            <person name="Ouyang S."/>
            <person name="Schwartz D.C."/>
            <person name="Tanaka T."/>
            <person name="Wu J."/>
            <person name="Zhou S."/>
            <person name="Childs K.L."/>
            <person name="Davidson R.M."/>
            <person name="Lin H."/>
            <person name="Quesada-Ocampo L."/>
            <person name="Vaillancourt B."/>
            <person name="Sakai H."/>
            <person name="Lee S.S."/>
            <person name="Kim J."/>
            <person name="Numa H."/>
            <person name="Itoh T."/>
            <person name="Buell C.R."/>
            <person name="Matsumoto T."/>
        </authorList>
    </citation>
    <scope>GENOME REANNOTATION</scope>
    <source>
        <strain>cv. Nipponbare</strain>
    </source>
</reference>
<reference key="4">
    <citation type="journal article" date="2005" name="PLoS Biol.">
        <title>The genomes of Oryza sativa: a history of duplications.</title>
        <authorList>
            <person name="Yu J."/>
            <person name="Wang J."/>
            <person name="Lin W."/>
            <person name="Li S."/>
            <person name="Li H."/>
            <person name="Zhou J."/>
            <person name="Ni P."/>
            <person name="Dong W."/>
            <person name="Hu S."/>
            <person name="Zeng C."/>
            <person name="Zhang J."/>
            <person name="Zhang Y."/>
            <person name="Li R."/>
            <person name="Xu Z."/>
            <person name="Li S."/>
            <person name="Li X."/>
            <person name="Zheng H."/>
            <person name="Cong L."/>
            <person name="Lin L."/>
            <person name="Yin J."/>
            <person name="Geng J."/>
            <person name="Li G."/>
            <person name="Shi J."/>
            <person name="Liu J."/>
            <person name="Lv H."/>
            <person name="Li J."/>
            <person name="Wang J."/>
            <person name="Deng Y."/>
            <person name="Ran L."/>
            <person name="Shi X."/>
            <person name="Wang X."/>
            <person name="Wu Q."/>
            <person name="Li C."/>
            <person name="Ren X."/>
            <person name="Wang J."/>
            <person name="Wang X."/>
            <person name="Li D."/>
            <person name="Liu D."/>
            <person name="Zhang X."/>
            <person name="Ji Z."/>
            <person name="Zhao W."/>
            <person name="Sun Y."/>
            <person name="Zhang Z."/>
            <person name="Bao J."/>
            <person name="Han Y."/>
            <person name="Dong L."/>
            <person name="Ji J."/>
            <person name="Chen P."/>
            <person name="Wu S."/>
            <person name="Liu J."/>
            <person name="Xiao Y."/>
            <person name="Bu D."/>
            <person name="Tan J."/>
            <person name="Yang L."/>
            <person name="Ye C."/>
            <person name="Zhang J."/>
            <person name="Xu J."/>
            <person name="Zhou Y."/>
            <person name="Yu Y."/>
            <person name="Zhang B."/>
            <person name="Zhuang S."/>
            <person name="Wei H."/>
            <person name="Liu B."/>
            <person name="Lei M."/>
            <person name="Yu H."/>
            <person name="Li Y."/>
            <person name="Xu H."/>
            <person name="Wei S."/>
            <person name="He X."/>
            <person name="Fang L."/>
            <person name="Zhang Z."/>
            <person name="Zhang Y."/>
            <person name="Huang X."/>
            <person name="Su Z."/>
            <person name="Tong W."/>
            <person name="Li J."/>
            <person name="Tong Z."/>
            <person name="Li S."/>
            <person name="Ye J."/>
            <person name="Wang L."/>
            <person name="Fang L."/>
            <person name="Lei T."/>
            <person name="Chen C.-S."/>
            <person name="Chen H.-C."/>
            <person name="Xu Z."/>
            <person name="Li H."/>
            <person name="Huang H."/>
            <person name="Zhang F."/>
            <person name="Xu H."/>
            <person name="Li N."/>
            <person name="Zhao C."/>
            <person name="Li S."/>
            <person name="Dong L."/>
            <person name="Huang Y."/>
            <person name="Li L."/>
            <person name="Xi Y."/>
            <person name="Qi Q."/>
            <person name="Li W."/>
            <person name="Zhang B."/>
            <person name="Hu W."/>
            <person name="Zhang Y."/>
            <person name="Tian X."/>
            <person name="Jiao Y."/>
            <person name="Liang X."/>
            <person name="Jin J."/>
            <person name="Gao L."/>
            <person name="Zheng W."/>
            <person name="Hao B."/>
            <person name="Liu S.-M."/>
            <person name="Wang W."/>
            <person name="Yuan L."/>
            <person name="Cao M."/>
            <person name="McDermott J."/>
            <person name="Samudrala R."/>
            <person name="Wang J."/>
            <person name="Wong G.K.-S."/>
            <person name="Yang H."/>
        </authorList>
    </citation>
    <scope>NUCLEOTIDE SEQUENCE [LARGE SCALE GENOMIC DNA]</scope>
    <source>
        <strain>cv. Nipponbare</strain>
    </source>
</reference>
<reference key="5">
    <citation type="journal article" date="2003" name="Science">
        <title>Collection, mapping, and annotation of over 28,000 cDNA clones from japonica rice.</title>
        <authorList>
            <consortium name="The rice full-length cDNA consortium"/>
        </authorList>
    </citation>
    <scope>NUCLEOTIDE SEQUENCE [LARGE SCALE MRNA]</scope>
    <source>
        <strain>cv. Nipponbare</strain>
    </source>
</reference>
<reference key="6">
    <citation type="journal article" date="2017" name="Plant Physiol.">
        <title>Rice cellulose synthaseA8 plant-conserved region is a coiled-coil at the catalytic core entrance.</title>
        <authorList>
            <person name="Rushton P.S."/>
            <person name="Olek A.T."/>
            <person name="Makowski L."/>
            <person name="Badger J."/>
            <person name="Steussy C.N."/>
            <person name="Carpita N.C."/>
            <person name="Stauffacher C.V."/>
        </authorList>
    </citation>
    <scope>X-RAY CRYSTALLOGRAPHY (2.40 ANGSTROMS) OF 398-523</scope>
</reference>
<gene>
    <name type="primary">CESA8</name>
    <name type="ordered locus">Os07g0208500</name>
    <name type="ordered locus">LOC_Os07g10770</name>
    <name type="ORF">OJ1136_A05.10</name>
    <name type="ORF">OJ1559_F09.120</name>
    <name type="ORF">OsJ_022567</name>
</gene>
<keyword id="KW-0002">3D-structure</keyword>
<keyword id="KW-1003">Cell membrane</keyword>
<keyword id="KW-0961">Cell wall biogenesis/degradation</keyword>
<keyword id="KW-0135">Cellulose biosynthesis</keyword>
<keyword id="KW-0175">Coiled coil</keyword>
<keyword id="KW-0325">Glycoprotein</keyword>
<keyword id="KW-0328">Glycosyltransferase</keyword>
<keyword id="KW-0464">Manganese</keyword>
<keyword id="KW-0472">Membrane</keyword>
<keyword id="KW-0479">Metal-binding</keyword>
<keyword id="KW-1185">Reference proteome</keyword>
<keyword id="KW-0808">Transferase</keyword>
<keyword id="KW-0812">Transmembrane</keyword>
<keyword id="KW-1133">Transmembrane helix</keyword>
<keyword id="KW-0862">Zinc</keyword>
<keyword id="KW-0863">Zinc-finger</keyword>
<dbReference type="EC" id="2.4.1.12" evidence="6"/>
<dbReference type="EMBL" id="AP003748">
    <property type="protein sequence ID" value="BAD30175.1"/>
    <property type="molecule type" value="Genomic_DNA"/>
</dbReference>
<dbReference type="EMBL" id="AP003837">
    <property type="protein sequence ID" value="BAC57282.1"/>
    <property type="molecule type" value="Genomic_DNA"/>
</dbReference>
<dbReference type="EMBL" id="AP008213">
    <property type="protein sequence ID" value="BAF21076.1"/>
    <property type="molecule type" value="Genomic_DNA"/>
</dbReference>
<dbReference type="EMBL" id="AP014963">
    <property type="protein sequence ID" value="BAT00571.1"/>
    <property type="molecule type" value="Genomic_DNA"/>
</dbReference>
<dbReference type="EMBL" id="CM000144">
    <property type="protein sequence ID" value="EAZ39084.1"/>
    <property type="molecule type" value="Genomic_DNA"/>
</dbReference>
<dbReference type="EMBL" id="AK072356">
    <property type="protein sequence ID" value="BAG92935.1"/>
    <property type="molecule type" value="mRNA"/>
</dbReference>
<dbReference type="RefSeq" id="XP_015646894.1">
    <property type="nucleotide sequence ID" value="XM_015791408.1"/>
</dbReference>
<dbReference type="PDB" id="5JNP">
    <property type="method" value="X-ray"/>
    <property type="resolution" value="2.40 A"/>
    <property type="chains" value="A/B=398-523"/>
</dbReference>
<dbReference type="PDBsum" id="5JNP"/>
<dbReference type="SMR" id="Q84ZN6"/>
<dbReference type="FunCoup" id="Q84ZN6">
    <property type="interactions" value="1277"/>
</dbReference>
<dbReference type="STRING" id="39947.Q84ZN6"/>
<dbReference type="CAZy" id="GT2">
    <property type="family name" value="Glycosyltransferase Family 2"/>
</dbReference>
<dbReference type="GlyCosmos" id="Q84ZN6">
    <property type="glycosylation" value="1 site, No reported glycans"/>
</dbReference>
<dbReference type="PaxDb" id="39947-Q84ZN6"/>
<dbReference type="EnsemblPlants" id="Os07t0208500-01">
    <property type="protein sequence ID" value="Os07t0208500-01"/>
    <property type="gene ID" value="Os07g0208500"/>
</dbReference>
<dbReference type="Gramene" id="Os07t0208500-01">
    <property type="protein sequence ID" value="Os07t0208500-01"/>
    <property type="gene ID" value="Os07g0208500"/>
</dbReference>
<dbReference type="KEGG" id="dosa:Os07g0208500"/>
<dbReference type="eggNOG" id="ENOG502QSUQ">
    <property type="taxonomic scope" value="Eukaryota"/>
</dbReference>
<dbReference type="HOGENOM" id="CLU_001418_0_1_1"/>
<dbReference type="InParanoid" id="Q84ZN6"/>
<dbReference type="OMA" id="GWQMAYG"/>
<dbReference type="OrthoDB" id="72851at2759"/>
<dbReference type="BRENDA" id="2.4.1.12">
    <property type="organism ID" value="4460"/>
</dbReference>
<dbReference type="PlantReactome" id="R-OSA-1119314">
    <property type="pathway name" value="Cellulose biosynthesis"/>
</dbReference>
<dbReference type="UniPathway" id="UPA00695"/>
<dbReference type="Proteomes" id="UP000000763">
    <property type="component" value="Chromosome 7"/>
</dbReference>
<dbReference type="Proteomes" id="UP000007752">
    <property type="component" value="Chromosome 7"/>
</dbReference>
<dbReference type="Proteomes" id="UP000059680">
    <property type="component" value="Chromosome 7"/>
</dbReference>
<dbReference type="ExpressionAtlas" id="Q84ZN6">
    <property type="expression patterns" value="baseline and differential"/>
</dbReference>
<dbReference type="GO" id="GO:0005886">
    <property type="term" value="C:plasma membrane"/>
    <property type="evidence" value="ECO:0000318"/>
    <property type="project" value="GO_Central"/>
</dbReference>
<dbReference type="GO" id="GO:0016760">
    <property type="term" value="F:cellulose synthase (UDP-forming) activity"/>
    <property type="evidence" value="ECO:0007669"/>
    <property type="project" value="UniProtKB-EC"/>
</dbReference>
<dbReference type="GO" id="GO:0016759">
    <property type="term" value="F:cellulose synthase activity"/>
    <property type="evidence" value="ECO:0000318"/>
    <property type="project" value="GO_Central"/>
</dbReference>
<dbReference type="GO" id="GO:0008270">
    <property type="term" value="F:zinc ion binding"/>
    <property type="evidence" value="ECO:0007669"/>
    <property type="project" value="UniProtKB-KW"/>
</dbReference>
<dbReference type="GO" id="GO:0071555">
    <property type="term" value="P:cell wall organization"/>
    <property type="evidence" value="ECO:0007669"/>
    <property type="project" value="UniProtKB-KW"/>
</dbReference>
<dbReference type="GO" id="GO:0030244">
    <property type="term" value="P:cellulose biosynthetic process"/>
    <property type="evidence" value="ECO:0000318"/>
    <property type="project" value="GO_Central"/>
</dbReference>
<dbReference type="GO" id="GO:0009833">
    <property type="term" value="P:plant-type primary cell wall biogenesis"/>
    <property type="evidence" value="ECO:0000318"/>
    <property type="project" value="GO_Central"/>
</dbReference>
<dbReference type="CDD" id="cd16617">
    <property type="entry name" value="mRING-HC-C4C4_CesA"/>
    <property type="match status" value="1"/>
</dbReference>
<dbReference type="FunFam" id="3.30.40.10:FF:000339">
    <property type="entry name" value="Cellulose synthase"/>
    <property type="match status" value="1"/>
</dbReference>
<dbReference type="FunFam" id="3.90.550.10:FF:000009">
    <property type="entry name" value="Cellulose synthase"/>
    <property type="match status" value="1"/>
</dbReference>
<dbReference type="Gene3D" id="3.90.550.10">
    <property type="entry name" value="Spore Coat Polysaccharide Biosynthesis Protein SpsA, Chain A"/>
    <property type="match status" value="1"/>
</dbReference>
<dbReference type="Gene3D" id="3.30.40.10">
    <property type="entry name" value="Zinc/RING finger domain, C3HC4 (zinc finger)"/>
    <property type="match status" value="1"/>
</dbReference>
<dbReference type="InterPro" id="IPR005150">
    <property type="entry name" value="Cellulose_synth"/>
</dbReference>
<dbReference type="InterPro" id="IPR027934">
    <property type="entry name" value="CES_Znf_RING"/>
</dbReference>
<dbReference type="InterPro" id="IPR029044">
    <property type="entry name" value="Nucleotide-diphossugar_trans"/>
</dbReference>
<dbReference type="InterPro" id="IPR013083">
    <property type="entry name" value="Znf_RING/FYVE/PHD"/>
</dbReference>
<dbReference type="PANTHER" id="PTHR13301">
    <property type="entry name" value="X-BOX TRANSCRIPTION FACTOR-RELATED"/>
    <property type="match status" value="1"/>
</dbReference>
<dbReference type="Pfam" id="PF03552">
    <property type="entry name" value="Cellulose_synt"/>
    <property type="match status" value="1"/>
</dbReference>
<dbReference type="Pfam" id="PF14569">
    <property type="entry name" value="zf-UDP"/>
    <property type="match status" value="1"/>
</dbReference>
<dbReference type="SUPFAM" id="SSF53448">
    <property type="entry name" value="Nucleotide-diphospho-sugar transferases"/>
    <property type="match status" value="1"/>
</dbReference>
<dbReference type="SUPFAM" id="SSF57850">
    <property type="entry name" value="RING/U-box"/>
    <property type="match status" value="1"/>
</dbReference>
<sequence>MDGDADAVKSGRHGSGQACQICGDGVGTTAEGDVFAACDVCGFPVCRPCYEYERKDGTQACPQCKTKYKRHKGSPAIRGEEGEDTDADDVSDYNYPASGSADQKQKIADRMRSWRMNAGGGGDVGRPKYDSGEIGLTKYDSGEIPRGYIPSVTNSQISGEIPGASPDHHMMSPTGNIGKRAPFPYVNHSPNPSREFSGSIGNVAWKERVDGWKLKQDKGAIPMTNGTSIAPSEGRGVGDIDASTDYNMEDALLNDETRQPLSRKVPLPSSRINPYRMVIVLRLVVLSIFLHYRITNPVRNAYPLWLLSVICEIWFALSWILDQFPKWFPINRETYLDRLALRYDREGEPSQLAAVDIFVSTVDPMKEPPLVTANTVLSILAVDYPVDKVSCYVSDDGAAMLTFDALAETSEFARKWVPFVKKYNIEPRAPEWYFSQKIDYLKDKVHPSFVKDRRAMKREYEEFKVRINGLVAKAQKVPEEGWIMQDGTPWPGNNTRDHPGMIQVFLGHSGGLDTEGNELPRLVYVSREKRPGFQHHKKAGAMNALVRVSAVLTNGQYMLNLDCDHYINNSKALREAMCFLMDPNLGRSVCYVQFPQRFDGIDRNDRYANRNTVFFDINLRGLDGIQGPVYVGTGCVFNRTALYGYEPPIKQKKKGSFLSSLCGGRKKASKSKKKSSDKKKSNKHVDSAVPVFNLEDIEEGVEGAGFDDEKSLLMSQMSLEKRFGQSAAFVASTLMEYGGVPQSATPESLLKEAIHVISCGYEDKTEWGTEIGWIYGSVTEDILTGFKMHARGWRSIYCMPKRPAFKGSAPINLSDRLNQVLRWALGSVEILFSRHCPIWYGYGGRLKFLERFAYINTTIYPLTSIPLLIYCVLPAICLLTGKFIIPEISNFASIWFISLFISIFATGILEMRWSGVGIDEWWRNEQFWVIGGISAHLFAVFQGLLKVLAGIDTNFTVTSKASDEDGDFAELYMFKWTTLLIPPTTILIINLVGVVAGISYAINSGYQSWGPLFGKLFFAFWVIVHLYPFLKGLMGRQNRTPTIVVVWAILLASIFSLLWVRIDPFTTRVTGPDTQTCGINC</sequence>
<name>CESA8_ORYSJ</name>
<accession>Q84ZN6</accession>
<accession>B7EKN8</accession>
<organism>
    <name type="scientific">Oryza sativa subsp. japonica</name>
    <name type="common">Rice</name>
    <dbReference type="NCBI Taxonomy" id="39947"/>
    <lineage>
        <taxon>Eukaryota</taxon>
        <taxon>Viridiplantae</taxon>
        <taxon>Streptophyta</taxon>
        <taxon>Embryophyta</taxon>
        <taxon>Tracheophyta</taxon>
        <taxon>Spermatophyta</taxon>
        <taxon>Magnoliopsida</taxon>
        <taxon>Liliopsida</taxon>
        <taxon>Poales</taxon>
        <taxon>Poaceae</taxon>
        <taxon>BOP clade</taxon>
        <taxon>Oryzoideae</taxon>
        <taxon>Oryzeae</taxon>
        <taxon>Oryzinae</taxon>
        <taxon>Oryza</taxon>
        <taxon>Oryza sativa</taxon>
    </lineage>
</organism>
<feature type="chain" id="PRO_0000319368" description="Probable cellulose synthase A catalytic subunit 8 [UDP-forming]">
    <location>
        <begin position="1"/>
        <end position="1081"/>
    </location>
</feature>
<feature type="topological domain" description="Cytoplasmic" evidence="3">
    <location>
        <begin position="1"/>
        <end position="277"/>
    </location>
</feature>
<feature type="transmembrane region" description="Helical" evidence="3">
    <location>
        <begin position="278"/>
        <end position="298"/>
    </location>
</feature>
<feature type="topological domain" description="Extracellular" evidence="3">
    <location>
        <begin position="299"/>
        <end position="300"/>
    </location>
</feature>
<feature type="transmembrane region" description="Helical" evidence="3">
    <location>
        <begin position="301"/>
        <end position="321"/>
    </location>
</feature>
<feature type="topological domain" description="Cytoplasmic" evidence="3">
    <location>
        <begin position="322"/>
        <end position="864"/>
    </location>
</feature>
<feature type="transmembrane region" description="Helical" evidence="3">
    <location>
        <begin position="865"/>
        <end position="885"/>
    </location>
</feature>
<feature type="topological domain" description="Extracellular" evidence="3">
    <location>
        <begin position="886"/>
        <end position="890"/>
    </location>
</feature>
<feature type="transmembrane region" description="Helical" evidence="3">
    <location>
        <begin position="891"/>
        <end position="911"/>
    </location>
</feature>
<feature type="topological domain" description="Cytoplasmic" evidence="3">
    <location>
        <begin position="912"/>
        <end position="926"/>
    </location>
</feature>
<feature type="transmembrane region" description="Helical" evidence="3">
    <location>
        <begin position="927"/>
        <end position="947"/>
    </location>
</feature>
<feature type="topological domain" description="Extracellular" evidence="3">
    <location>
        <begin position="948"/>
        <end position="977"/>
    </location>
</feature>
<feature type="transmembrane region" description="Helical" evidence="3">
    <location>
        <begin position="978"/>
        <end position="998"/>
    </location>
</feature>
<feature type="topological domain" description="Cytoplasmic" evidence="3">
    <location>
        <begin position="999"/>
        <end position="1009"/>
    </location>
</feature>
<feature type="transmembrane region" description="Helical" evidence="3">
    <location>
        <begin position="1010"/>
        <end position="1030"/>
    </location>
</feature>
<feature type="topological domain" description="Extracellular" evidence="3">
    <location>
        <begin position="1031"/>
        <end position="1039"/>
    </location>
</feature>
<feature type="transmembrane region" description="Helical" evidence="3">
    <location>
        <begin position="1040"/>
        <end position="1060"/>
    </location>
</feature>
<feature type="topological domain" description="Cytoplasmic" evidence="3">
    <location>
        <begin position="1061"/>
        <end position="1081"/>
    </location>
</feature>
<feature type="zinc finger region" description="RING-type; degenerate">
    <location>
        <begin position="19"/>
        <end position="65"/>
    </location>
</feature>
<feature type="region of interest" description="Disordered" evidence="5">
    <location>
        <begin position="72"/>
        <end position="148"/>
    </location>
</feature>
<feature type="region of interest" description="Disordered" evidence="5">
    <location>
        <begin position="660"/>
        <end position="684"/>
    </location>
</feature>
<feature type="coiled-coil region" evidence="3">
    <location>
        <begin position="450"/>
        <end position="477"/>
    </location>
</feature>
<feature type="compositionally biased region" description="Acidic residues" evidence="5">
    <location>
        <begin position="81"/>
        <end position="91"/>
    </location>
</feature>
<feature type="compositionally biased region" description="Basic and acidic residues" evidence="5">
    <location>
        <begin position="103"/>
        <end position="112"/>
    </location>
</feature>
<feature type="compositionally biased region" description="Basic residues" evidence="5">
    <location>
        <begin position="664"/>
        <end position="682"/>
    </location>
</feature>
<feature type="active site" evidence="3">
    <location>
        <position position="396"/>
    </location>
</feature>
<feature type="active site" evidence="3">
    <location>
        <position position="781"/>
    </location>
</feature>
<feature type="binding site" evidence="2">
    <location>
        <position position="19"/>
    </location>
    <ligand>
        <name>Zn(2+)</name>
        <dbReference type="ChEBI" id="CHEBI:29105"/>
        <label>1</label>
    </ligand>
</feature>
<feature type="binding site" evidence="2">
    <location>
        <position position="22"/>
    </location>
    <ligand>
        <name>Zn(2+)</name>
        <dbReference type="ChEBI" id="CHEBI:29105"/>
        <label>1</label>
    </ligand>
</feature>
<feature type="binding site" evidence="2">
    <location>
        <position position="38"/>
    </location>
    <ligand>
        <name>Zn(2+)</name>
        <dbReference type="ChEBI" id="CHEBI:29105"/>
        <label>2</label>
    </ligand>
</feature>
<feature type="binding site" evidence="2">
    <location>
        <position position="41"/>
    </location>
    <ligand>
        <name>Zn(2+)</name>
        <dbReference type="ChEBI" id="CHEBI:29105"/>
        <label>2</label>
    </ligand>
</feature>
<feature type="binding site" evidence="2">
    <location>
        <position position="46"/>
    </location>
    <ligand>
        <name>Zn(2+)</name>
        <dbReference type="ChEBI" id="CHEBI:29105"/>
        <label>1</label>
    </ligand>
</feature>
<feature type="binding site" evidence="2">
    <location>
        <position position="49"/>
    </location>
    <ligand>
        <name>Zn(2+)</name>
        <dbReference type="ChEBI" id="CHEBI:29105"/>
        <label>1</label>
    </ligand>
</feature>
<feature type="binding site" evidence="2">
    <location>
        <position position="61"/>
    </location>
    <ligand>
        <name>Zn(2+)</name>
        <dbReference type="ChEBI" id="CHEBI:29105"/>
        <label>2</label>
    </ligand>
</feature>
<feature type="binding site" evidence="2">
    <location>
        <position position="64"/>
    </location>
    <ligand>
        <name>Zn(2+)</name>
        <dbReference type="ChEBI" id="CHEBI:29105"/>
        <label>2</label>
    </ligand>
</feature>
<feature type="binding site" evidence="1">
    <location>
        <position position="360"/>
    </location>
    <ligand>
        <name>UDP-alpha-D-glucose</name>
        <dbReference type="ChEBI" id="CHEBI:58885"/>
    </ligand>
</feature>
<feature type="binding site" evidence="1">
    <location>
        <position position="366"/>
    </location>
    <ligand>
        <name>UDP-alpha-D-glucose</name>
        <dbReference type="ChEBI" id="CHEBI:58885"/>
    </ligand>
</feature>
<feature type="binding site" evidence="1">
    <location>
        <position position="367"/>
    </location>
    <ligand>
        <name>UDP-alpha-D-glucose</name>
        <dbReference type="ChEBI" id="CHEBI:58885"/>
    </ligand>
</feature>
<feature type="binding site" evidence="1">
    <location>
        <position position="396"/>
    </location>
    <ligand>
        <name>UDP-alpha-D-glucose</name>
        <dbReference type="ChEBI" id="CHEBI:58885"/>
    </ligand>
</feature>
<feature type="binding site" evidence="1">
    <location>
        <position position="537"/>
    </location>
    <ligand>
        <name>UDP-alpha-D-glucose</name>
        <dbReference type="ChEBI" id="CHEBI:58885"/>
    </ligand>
</feature>
<feature type="binding site" evidence="1">
    <location>
        <position position="538"/>
    </location>
    <ligand>
        <name>Mn(2+)</name>
        <dbReference type="ChEBI" id="CHEBI:29035"/>
    </ligand>
</feature>
<feature type="binding site" evidence="1">
    <location>
        <position position="562"/>
    </location>
    <ligand>
        <name>Mn(2+)</name>
        <dbReference type="ChEBI" id="CHEBI:29035"/>
    </ligand>
</feature>
<feature type="glycosylation site" description="N-linked (GlcNAc...) asparagine" evidence="4">
    <location>
        <position position="954"/>
    </location>
</feature>
<feature type="helix" evidence="7">
    <location>
        <begin position="403"/>
        <end position="423"/>
    </location>
</feature>
<feature type="helix" evidence="7">
    <location>
        <begin position="430"/>
        <end position="435"/>
    </location>
</feature>
<feature type="turn" evidence="7">
    <location>
        <begin position="440"/>
        <end position="443"/>
    </location>
</feature>
<feature type="helix" evidence="7">
    <location>
        <begin position="449"/>
        <end position="471"/>
    </location>
</feature>
<comment type="function">
    <text evidence="2">Probable catalytic subunit of cellulose synthase terminal complexes ('rosettes'), required for beta-1,4-glucan microfibril crystallization, a major mechanism of the cell wall formation.</text>
</comment>
<comment type="catalytic activity">
    <reaction evidence="6">
        <text>[(1-&gt;4)-beta-D-glucosyl](n) + UDP-alpha-D-glucose = [(1-&gt;4)-beta-D-glucosyl](n+1) + UDP + H(+)</text>
        <dbReference type="Rhea" id="RHEA:19929"/>
        <dbReference type="Rhea" id="RHEA-COMP:10033"/>
        <dbReference type="Rhea" id="RHEA-COMP:10034"/>
        <dbReference type="ChEBI" id="CHEBI:15378"/>
        <dbReference type="ChEBI" id="CHEBI:18246"/>
        <dbReference type="ChEBI" id="CHEBI:58223"/>
        <dbReference type="ChEBI" id="CHEBI:58885"/>
        <dbReference type="EC" id="2.4.1.12"/>
    </reaction>
</comment>
<comment type="cofactor">
    <cofactor evidence="1">
        <name>Mn(2+)</name>
        <dbReference type="ChEBI" id="CHEBI:29035"/>
    </cofactor>
</comment>
<comment type="cofactor">
    <cofactor evidence="2">
        <name>Zn(2+)</name>
        <dbReference type="ChEBI" id="CHEBI:29105"/>
    </cofactor>
    <text evidence="2">Binds 2 Zn(2+) ions per subunit.</text>
</comment>
<comment type="pathway">
    <text>Glycan metabolism; plant cellulose biosynthesis.</text>
</comment>
<comment type="subcellular location">
    <subcellularLocation>
        <location evidence="6">Cell membrane</location>
        <topology evidence="6">Multi-pass membrane protein</topology>
    </subcellularLocation>
</comment>
<comment type="similarity">
    <text evidence="6">Belongs to the glycosyltransferase 2 family. Plant cellulose synthase subfamily.</text>
</comment>
<protein>
    <recommendedName>
        <fullName>Probable cellulose synthase A catalytic subunit 8 [UDP-forming]</fullName>
        <ecNumber evidence="6">2.4.1.12</ecNumber>
    </recommendedName>
    <alternativeName>
        <fullName>OsCesA8</fullName>
    </alternativeName>
</protein>
<evidence type="ECO:0000250" key="1">
    <source>
        <dbReference type="UniProtKB" id="Q941L0"/>
    </source>
</evidence>
<evidence type="ECO:0000250" key="2">
    <source>
        <dbReference type="UniProtKB" id="Q9SWW6"/>
    </source>
</evidence>
<evidence type="ECO:0000255" key="3"/>
<evidence type="ECO:0000255" key="4">
    <source>
        <dbReference type="PROSITE-ProRule" id="PRU00498"/>
    </source>
</evidence>
<evidence type="ECO:0000256" key="5">
    <source>
        <dbReference type="SAM" id="MobiDB-lite"/>
    </source>
</evidence>
<evidence type="ECO:0000305" key="6"/>
<evidence type="ECO:0007829" key="7">
    <source>
        <dbReference type="PDB" id="5JNP"/>
    </source>
</evidence>
<proteinExistence type="evidence at protein level"/>